<reference key="1">
    <citation type="journal article" date="2006" name="Genome Res.">
        <title>Skewed genomic variability in strains of the toxigenic bacterial pathogen, Clostridium perfringens.</title>
        <authorList>
            <person name="Myers G.S.A."/>
            <person name="Rasko D.A."/>
            <person name="Cheung J.K."/>
            <person name="Ravel J."/>
            <person name="Seshadri R."/>
            <person name="DeBoy R.T."/>
            <person name="Ren Q."/>
            <person name="Varga J."/>
            <person name="Awad M.M."/>
            <person name="Brinkac L.M."/>
            <person name="Daugherty S.C."/>
            <person name="Haft D.H."/>
            <person name="Dodson R.J."/>
            <person name="Madupu R."/>
            <person name="Nelson W.C."/>
            <person name="Rosovitz M.J."/>
            <person name="Sullivan S.A."/>
            <person name="Khouri H."/>
            <person name="Dimitrov G.I."/>
            <person name="Watkins K.L."/>
            <person name="Mulligan S."/>
            <person name="Benton J."/>
            <person name="Radune D."/>
            <person name="Fisher D.J."/>
            <person name="Atkins H.S."/>
            <person name="Hiscox T."/>
            <person name="Jost B.H."/>
            <person name="Billington S.J."/>
            <person name="Songer J.G."/>
            <person name="McClane B.A."/>
            <person name="Titball R.W."/>
            <person name="Rood J.I."/>
            <person name="Melville S.B."/>
            <person name="Paulsen I.T."/>
        </authorList>
    </citation>
    <scope>NUCLEOTIDE SEQUENCE [LARGE SCALE GENOMIC DNA]</scope>
    <source>
        <strain>ATCC 13124 / DSM 756 / JCM 1290 / NCIMB 6125 / NCTC 8237 / S 107 / Type A</strain>
    </source>
</reference>
<organism>
    <name type="scientific">Clostridium perfringens (strain ATCC 13124 / DSM 756 / JCM 1290 / NCIMB 6125 / NCTC 8237 / Type A)</name>
    <dbReference type="NCBI Taxonomy" id="195103"/>
    <lineage>
        <taxon>Bacteria</taxon>
        <taxon>Bacillati</taxon>
        <taxon>Bacillota</taxon>
        <taxon>Clostridia</taxon>
        <taxon>Eubacteriales</taxon>
        <taxon>Clostridiaceae</taxon>
        <taxon>Clostridium</taxon>
    </lineage>
</organism>
<gene>
    <name type="ordered locus">CPF_1748</name>
</gene>
<proteinExistence type="inferred from homology"/>
<evidence type="ECO:0000255" key="1">
    <source>
        <dbReference type="HAMAP-Rule" id="MF_01221"/>
    </source>
</evidence>
<sequence length="450" mass="47488">MLKNNEILETISMIKEQNLDVRTITLGLSLMDCACEDVKVLSEKIYDKITKTAENLVKTGEDIEKRFGIPIINKRISVTPISIVAASCNCNSYLDIAKAMDKAAKEVGVDFIGGFSALVHKGFTNSDLKLIKSLPESLANTDIVCSSVNIGSTRYGINMDAVKLMGETIKETSLITPDGFGCAKLVVFCNAVEDNPFMAGAFHGVGEAEKVINVGVSGPGVVKKALEEVRGKSFEEVAETIKKTSFKVTRMGQLVAKEASKLMDIPFGIVDLSLAPTPAVGDSVGRVLEEMGLSNCGTHGTTAALALLNDAVKKGGLMASSYVGGLSGAFIPVSEDECMIEQSKNGFLTIEKLEAMTCVCSVGLDMIAIPGKTSASTISGIIADEAAIGMINNKTTAVRIIPVPNKDIGDIVEFGGLLGSAPIMRVSPGNCDDFISRGGRIPAPVHSLKN</sequence>
<accession>Q0TQA6</accession>
<comment type="subunit">
    <text evidence="1">Homodimer.</text>
</comment>
<comment type="similarity">
    <text evidence="1">Belongs to the UPF0210 family.</text>
</comment>
<name>Y1748_CLOP1</name>
<protein>
    <recommendedName>
        <fullName evidence="1">UPF0210 protein CPF_1748</fullName>
    </recommendedName>
</protein>
<feature type="chain" id="PRO_1000066750" description="UPF0210 protein CPF_1748">
    <location>
        <begin position="1"/>
        <end position="450"/>
    </location>
</feature>
<dbReference type="EMBL" id="CP000246">
    <property type="protein sequence ID" value="ABG84208.1"/>
    <property type="molecule type" value="Genomic_DNA"/>
</dbReference>
<dbReference type="RefSeq" id="WP_003474040.1">
    <property type="nucleotide sequence ID" value="NC_008261.1"/>
</dbReference>
<dbReference type="SMR" id="Q0TQA6"/>
<dbReference type="STRING" id="195103.CPF_1748"/>
<dbReference type="PaxDb" id="195103-CPF_1748"/>
<dbReference type="KEGG" id="cpf:CPF_1748"/>
<dbReference type="eggNOG" id="COG2848">
    <property type="taxonomic scope" value="Bacteria"/>
</dbReference>
<dbReference type="HOGENOM" id="CLU_048704_0_0_9"/>
<dbReference type="Proteomes" id="UP000001823">
    <property type="component" value="Chromosome"/>
</dbReference>
<dbReference type="CDD" id="cd08025">
    <property type="entry name" value="RNR_PFL_like_DUF711"/>
    <property type="match status" value="1"/>
</dbReference>
<dbReference type="Gene3D" id="3.20.70.20">
    <property type="match status" value="1"/>
</dbReference>
<dbReference type="HAMAP" id="MF_01221">
    <property type="entry name" value="UPF0210"/>
    <property type="match status" value="1"/>
</dbReference>
<dbReference type="InterPro" id="IPR007841">
    <property type="entry name" value="UPF0210"/>
</dbReference>
<dbReference type="NCBIfam" id="NF003700">
    <property type="entry name" value="PRK05313.1"/>
    <property type="match status" value="1"/>
</dbReference>
<dbReference type="PANTHER" id="PTHR37560:SF1">
    <property type="entry name" value="UPF0210 PROTEIN MJ1665"/>
    <property type="match status" value="1"/>
</dbReference>
<dbReference type="PANTHER" id="PTHR37560">
    <property type="entry name" value="UPF0210 PROTEIN SPR0218"/>
    <property type="match status" value="1"/>
</dbReference>
<dbReference type="Pfam" id="PF05167">
    <property type="entry name" value="DUF711"/>
    <property type="match status" value="1"/>
</dbReference>
<dbReference type="SUPFAM" id="SSF51998">
    <property type="entry name" value="PFL-like glycyl radical enzymes"/>
    <property type="match status" value="1"/>
</dbReference>